<name>CG121_METJA</name>
<comment type="function">
    <text evidence="1">Component of the KEOPS complex that is probably involved in the transfer of the threonylcarbamoyl moiety of threonylcarbamoyl-AMP (TC-AMP) to the N6 group of A37, a step in the formation of a threonylcarbamoyl group on adenosine at position 37 (t(6)A37) in tRNAs that read codons beginning with adenine. Cgi121 stimulates Bud32 kinase activity via an activation of Bud32 autophosphorylation.</text>
</comment>
<comment type="subunit">
    <text evidence="1">Component of the KEOPS complex that consists of Kae1, Bud32, Cgi121 and Pcc1; the whole complex dimerizes.</text>
</comment>
<comment type="similarity">
    <text evidence="2">Belongs to the CGI121/TPRKB family.</text>
</comment>
<dbReference type="EMBL" id="L77117">
    <property type="protein sequence ID" value="AAB98167.1"/>
    <property type="molecule type" value="Genomic_DNA"/>
</dbReference>
<dbReference type="PIR" id="D64323">
    <property type="entry name" value="D64323"/>
</dbReference>
<dbReference type="RefSeq" id="WP_010869682.1">
    <property type="nucleotide sequence ID" value="NC_000909.1"/>
</dbReference>
<dbReference type="PDB" id="2K8Y">
    <property type="method" value="NMR"/>
    <property type="chains" value="A=1-145"/>
</dbReference>
<dbReference type="PDB" id="3ENH">
    <property type="method" value="X-ray"/>
    <property type="resolution" value="3.60 A"/>
    <property type="chains" value="C/D=1-145"/>
</dbReference>
<dbReference type="PDB" id="7KJT">
    <property type="method" value="X-ray"/>
    <property type="resolution" value="3.34 A"/>
    <property type="chains" value="H=1-145"/>
</dbReference>
<dbReference type="PDB" id="9D85">
    <property type="method" value="EM"/>
    <property type="resolution" value="3.59 A"/>
    <property type="chains" value="C=1-145"/>
</dbReference>
<dbReference type="PDBsum" id="2K8Y"/>
<dbReference type="PDBsum" id="3ENH"/>
<dbReference type="PDBsum" id="7KJT"/>
<dbReference type="PDBsum" id="9D85"/>
<dbReference type="BMRB" id="Q57646"/>
<dbReference type="EMDB" id="EMD-46630"/>
<dbReference type="SMR" id="Q57646"/>
<dbReference type="STRING" id="243232.MJ_0187"/>
<dbReference type="PaxDb" id="243232-MJ_0187"/>
<dbReference type="EnsemblBacteria" id="AAB98167">
    <property type="protein sequence ID" value="AAB98167"/>
    <property type="gene ID" value="MJ_0187"/>
</dbReference>
<dbReference type="GeneID" id="1451034"/>
<dbReference type="KEGG" id="mja:MJ_0187"/>
<dbReference type="eggNOG" id="arCOG02197">
    <property type="taxonomic scope" value="Archaea"/>
</dbReference>
<dbReference type="HOGENOM" id="CLU_1801715_0_0_2"/>
<dbReference type="InParanoid" id="Q57646"/>
<dbReference type="OrthoDB" id="69587at2157"/>
<dbReference type="PhylomeDB" id="Q57646"/>
<dbReference type="EvolutionaryTrace" id="Q57646"/>
<dbReference type="Proteomes" id="UP000000805">
    <property type="component" value="Chromosome"/>
</dbReference>
<dbReference type="Gene3D" id="3.30.2380.10">
    <property type="entry name" value="CGI121/TPRKB"/>
    <property type="match status" value="1"/>
</dbReference>
<dbReference type="InterPro" id="IPR013926">
    <property type="entry name" value="CGI121/TPRKB"/>
</dbReference>
<dbReference type="InterPro" id="IPR036504">
    <property type="entry name" value="CGI121/TPRKB_sf"/>
</dbReference>
<dbReference type="NCBIfam" id="NF011465">
    <property type="entry name" value="PRK14886.1-1"/>
    <property type="match status" value="1"/>
</dbReference>
<dbReference type="Pfam" id="PF08617">
    <property type="entry name" value="CGI-121"/>
    <property type="match status" value="1"/>
</dbReference>
<dbReference type="SUPFAM" id="SSF143870">
    <property type="entry name" value="PF0523-like"/>
    <property type="match status" value="1"/>
</dbReference>
<protein>
    <recommendedName>
        <fullName>Regulatory protein Cgi121</fullName>
    </recommendedName>
    <alternativeName>
        <fullName>Positive regulator of Bud32 kinase activity</fullName>
    </alternativeName>
</protein>
<sequence length="145" mass="16593">MIIRGIRGARINNEIFNLGLKFQILNADVVATKKHVLHAINQAKTKKPIAKSFWMEILVRASGQRQIHEAIKIIGAKDGNVCLICEDEETFRKIYELIGGEIDDSVLEINEDKERLIREIFKIRGFGNVVERVLEKIALIELKKE</sequence>
<evidence type="ECO:0000269" key="1">
    <source>
    </source>
</evidence>
<evidence type="ECO:0000305" key="2"/>
<evidence type="ECO:0007829" key="3">
    <source>
        <dbReference type="PDB" id="7KJT"/>
    </source>
</evidence>
<accession>Q57646</accession>
<reference key="1">
    <citation type="journal article" date="1996" name="Science">
        <title>Complete genome sequence of the methanogenic archaeon, Methanococcus jannaschii.</title>
        <authorList>
            <person name="Bult C.J."/>
            <person name="White O."/>
            <person name="Olsen G.J."/>
            <person name="Zhou L."/>
            <person name="Fleischmann R.D."/>
            <person name="Sutton G.G."/>
            <person name="Blake J.A."/>
            <person name="FitzGerald L.M."/>
            <person name="Clayton R.A."/>
            <person name="Gocayne J.D."/>
            <person name="Kerlavage A.R."/>
            <person name="Dougherty B.A."/>
            <person name="Tomb J.-F."/>
            <person name="Adams M.D."/>
            <person name="Reich C.I."/>
            <person name="Overbeek R."/>
            <person name="Kirkness E.F."/>
            <person name="Weinstock K.G."/>
            <person name="Merrick J.M."/>
            <person name="Glodek A."/>
            <person name="Scott J.L."/>
            <person name="Geoghagen N.S.M."/>
            <person name="Weidman J.F."/>
            <person name="Fuhrmann J.L."/>
            <person name="Nguyen D."/>
            <person name="Utterback T.R."/>
            <person name="Kelley J.M."/>
            <person name="Peterson J.D."/>
            <person name="Sadow P.W."/>
            <person name="Hanna M.C."/>
            <person name="Cotton M.D."/>
            <person name="Roberts K.M."/>
            <person name="Hurst M.A."/>
            <person name="Kaine B.P."/>
            <person name="Borodovsky M."/>
            <person name="Klenk H.-P."/>
            <person name="Fraser C.M."/>
            <person name="Smith H.O."/>
            <person name="Woese C.R."/>
            <person name="Venter J.C."/>
        </authorList>
    </citation>
    <scope>NUCLEOTIDE SEQUENCE [LARGE SCALE GENOMIC DNA]</scope>
    <source>
        <strain>ATCC 43067 / DSM 2661 / JAL-1 / JCM 10045 / NBRC 100440</strain>
    </source>
</reference>
<reference key="2">
    <citation type="journal article" date="2008" name="Mol. Cell">
        <title>Atomic structure of the KEOPS complex: an ancient protein kinase-containing molecular machine.</title>
        <authorList>
            <person name="Mao D.Y."/>
            <person name="Neculai D."/>
            <person name="Downey M."/>
            <person name="Orlicky S."/>
            <person name="Haffani Y.Z."/>
            <person name="Ceccarelli D.F."/>
            <person name="Ho J.S."/>
            <person name="Szilard R.K."/>
            <person name="Zhang W."/>
            <person name="Ho C.S."/>
            <person name="Wan L."/>
            <person name="Fares C."/>
            <person name="Rumpel S."/>
            <person name="Kurinov I."/>
            <person name="Arrowsmith C.H."/>
            <person name="Durocher D."/>
            <person name="Sicheri F."/>
        </authorList>
    </citation>
    <scope>X-RAY CRYSTALLOGRAPHY (3.60 ANGSTROMS) IN COMPLEX WITH KAE1-BUD32</scope>
    <scope>STRUCTURE BY NMR</scope>
    <scope>FUNCTION</scope>
    <scope>SUBUNIT</scope>
    <scope>MUTAGENESIS OF LEU-134; ALA-138 AND LEU-139</scope>
</reference>
<keyword id="KW-0002">3D-structure</keyword>
<keyword id="KW-1185">Reference proteome</keyword>
<organism>
    <name type="scientific">Methanocaldococcus jannaschii (strain ATCC 43067 / DSM 2661 / JAL-1 / JCM 10045 / NBRC 100440)</name>
    <name type="common">Methanococcus jannaschii</name>
    <dbReference type="NCBI Taxonomy" id="243232"/>
    <lineage>
        <taxon>Archaea</taxon>
        <taxon>Methanobacteriati</taxon>
        <taxon>Methanobacteriota</taxon>
        <taxon>Methanomada group</taxon>
        <taxon>Methanococci</taxon>
        <taxon>Methanococcales</taxon>
        <taxon>Methanocaldococcaceae</taxon>
        <taxon>Methanocaldococcus</taxon>
    </lineage>
</organism>
<feature type="chain" id="PRO_0000106735" description="Regulatory protein Cgi121">
    <location>
        <begin position="1"/>
        <end position="145"/>
    </location>
</feature>
<feature type="mutagenesis site" description="No effect on Bud32 binding." evidence="1">
    <original>L</original>
    <variation>E</variation>
    <location>
        <position position="134"/>
    </location>
</feature>
<feature type="mutagenesis site" description="Severely affects Bud32 binding and does not stimulate Bud32 kinase activity; when associated with R-138." evidence="1">
    <original>L</original>
    <variation>E</variation>
    <location>
        <position position="134"/>
    </location>
</feature>
<feature type="mutagenesis site" description="No effect on Bud32 binding." evidence="1">
    <original>A</original>
    <variation>R</variation>
    <location>
        <position position="138"/>
    </location>
</feature>
<feature type="mutagenesis site" description="Severely affects Bud32 binding and does not stimulate Bud32 kinase activity; when associated with E-134." evidence="1">
    <original>A</original>
    <variation>R</variation>
    <location>
        <position position="138"/>
    </location>
</feature>
<feature type="mutagenesis site" description="No effect on Bud32 binding." evidence="1">
    <original>L</original>
    <variation>R</variation>
    <location>
        <position position="139"/>
    </location>
</feature>
<feature type="strand" evidence="3">
    <location>
        <begin position="2"/>
        <end position="9"/>
    </location>
</feature>
<feature type="helix" evidence="3">
    <location>
        <begin position="13"/>
        <end position="17"/>
    </location>
</feature>
<feature type="strand" evidence="3">
    <location>
        <begin position="21"/>
        <end position="26"/>
    </location>
</feature>
<feature type="helix" evidence="3">
    <location>
        <begin position="27"/>
        <end position="29"/>
    </location>
</feature>
<feature type="helix" evidence="3">
    <location>
        <begin position="33"/>
        <end position="45"/>
    </location>
</feature>
<feature type="strand" evidence="3">
    <location>
        <begin position="49"/>
        <end position="52"/>
    </location>
</feature>
<feature type="helix" evidence="3">
    <location>
        <begin position="53"/>
        <end position="62"/>
    </location>
</feature>
<feature type="helix" evidence="3">
    <location>
        <begin position="67"/>
        <end position="74"/>
    </location>
</feature>
<feature type="strand" evidence="3">
    <location>
        <begin position="78"/>
        <end position="87"/>
    </location>
</feature>
<feature type="helix" evidence="3">
    <location>
        <begin position="88"/>
        <end position="98"/>
    </location>
</feature>
<feature type="helix" evidence="3">
    <location>
        <begin position="104"/>
        <end position="107"/>
    </location>
</feature>
<feature type="helix" evidence="3">
    <location>
        <begin position="111"/>
        <end position="120"/>
    </location>
</feature>
<feature type="strand" evidence="3">
    <location>
        <begin position="125"/>
        <end position="127"/>
    </location>
</feature>
<feature type="helix" evidence="3">
    <location>
        <begin position="129"/>
        <end position="138"/>
    </location>
</feature>
<feature type="helix" evidence="3">
    <location>
        <begin position="139"/>
        <end position="141"/>
    </location>
</feature>
<proteinExistence type="evidence at protein level"/>
<gene>
    <name type="primary">cgi121</name>
    <name type="ordered locus">MJ0187</name>
</gene>